<feature type="chain" id="PRO_0000143069" description="Bcl-2-like protein 10">
    <location>
        <begin position="1"/>
        <end position="191"/>
    </location>
</feature>
<feature type="transmembrane region" description="Helical" evidence="2">
    <location>
        <begin position="166"/>
        <end position="183"/>
    </location>
</feature>
<feature type="short sequence motif" description="BH1">
    <location>
        <begin position="79"/>
        <end position="98"/>
    </location>
</feature>
<feature type="short sequence motif" description="BH2">
    <location>
        <begin position="144"/>
        <end position="155"/>
    </location>
</feature>
<feature type="cross-link" description="Glycyl lysine isopeptide (Lys-Gly) (interchain with G-Cter in ubiquitin)" evidence="1">
    <location>
        <position position="112"/>
    </location>
</feature>
<feature type="sequence conflict" description="In Ref. 5; AAH52690." evidence="9" ref="5">
    <original>E</original>
    <variation>G</variation>
    <location>
        <position position="10"/>
    </location>
</feature>
<feature type="strand" evidence="12">
    <location>
        <begin position="3"/>
        <end position="5"/>
    </location>
</feature>
<feature type="helix" evidence="12">
    <location>
        <begin position="9"/>
        <end position="24"/>
    </location>
</feature>
<feature type="helix" evidence="12">
    <location>
        <begin position="37"/>
        <end position="61"/>
    </location>
</feature>
<feature type="turn" evidence="12">
    <location>
        <begin position="62"/>
        <end position="64"/>
    </location>
</feature>
<feature type="helix" evidence="12">
    <location>
        <begin position="67"/>
        <end position="77"/>
    </location>
</feature>
<feature type="strand" evidence="12">
    <location>
        <begin position="81"/>
        <end position="83"/>
    </location>
</feature>
<feature type="helix" evidence="12">
    <location>
        <begin position="87"/>
        <end position="100"/>
    </location>
</feature>
<feature type="helix" evidence="12">
    <location>
        <begin position="120"/>
        <end position="136"/>
    </location>
</feature>
<feature type="helix" evidence="12">
    <location>
        <begin position="139"/>
        <end position="147"/>
    </location>
</feature>
<feature type="helix" evidence="12">
    <location>
        <begin position="150"/>
        <end position="157"/>
    </location>
</feature>
<feature type="strand" evidence="12">
    <location>
        <begin position="161"/>
        <end position="163"/>
    </location>
</feature>
<evidence type="ECO:0000250" key="1">
    <source>
        <dbReference type="UniProtKB" id="Q9HD36"/>
    </source>
</evidence>
<evidence type="ECO:0000255" key="2"/>
<evidence type="ECO:0000269" key="3">
    <source>
    </source>
</evidence>
<evidence type="ECO:0000269" key="4">
    <source>
    </source>
</evidence>
<evidence type="ECO:0000269" key="5">
    <source>
    </source>
</evidence>
<evidence type="ECO:0000269" key="6">
    <source>
    </source>
</evidence>
<evidence type="ECO:0000303" key="7">
    <source>
    </source>
</evidence>
<evidence type="ECO:0000303" key="8">
    <source>
    </source>
</evidence>
<evidence type="ECO:0000305" key="9"/>
<evidence type="ECO:0000312" key="10">
    <source>
        <dbReference type="MGI" id="MGI:1330841"/>
    </source>
</evidence>
<evidence type="ECO:0007744" key="11">
    <source>
        <dbReference type="PDB" id="2KUA"/>
    </source>
</evidence>
<evidence type="ECO:0007829" key="12">
    <source>
        <dbReference type="PDB" id="2KUA"/>
    </source>
</evidence>
<organism>
    <name type="scientific">Mus musculus</name>
    <name type="common">Mouse</name>
    <dbReference type="NCBI Taxonomy" id="10090"/>
    <lineage>
        <taxon>Eukaryota</taxon>
        <taxon>Metazoa</taxon>
        <taxon>Chordata</taxon>
        <taxon>Craniata</taxon>
        <taxon>Vertebrata</taxon>
        <taxon>Euteleostomi</taxon>
        <taxon>Mammalia</taxon>
        <taxon>Eutheria</taxon>
        <taxon>Euarchontoglires</taxon>
        <taxon>Glires</taxon>
        <taxon>Rodentia</taxon>
        <taxon>Myomorpha</taxon>
        <taxon>Muroidea</taxon>
        <taxon>Muridae</taxon>
        <taxon>Murinae</taxon>
        <taxon>Mus</taxon>
        <taxon>Mus</taxon>
    </lineage>
</organism>
<comment type="function">
    <text evidence="1 4">Promotes cell survival by suppressing apoptosis induced by BAX but not BAK (By similarity). Increases binding of AHCYL1/IRBIT to ITPR1 (By similarity). Reduces ITPR1-mediated calcium release from the endoplasmic reticulum cooperatively with AHCYL1/IRBIT under normal cellular conditions (By similarity). Under apoptotic stress conditions, dissociates from ITPR1 and is displaced from mitochondria-associated endoplasmic reticulum membranes, leading to increased Ca(2+) transfer to mitochondria which promotes apoptosis (By similarity). Required for the correct formation of the microtubule organizing center during oocyte cell division, potentially via regulation of protein abundance and localization of other microtubule organizing center components such as AURKA and TPX2 (PubMed:27753540).</text>
</comment>
<comment type="cofactor">
    <cofactor evidence="1">
        <name>Ca(2+)</name>
        <dbReference type="ChEBI" id="CHEBI:29108"/>
    </cofactor>
</comment>
<comment type="subunit">
    <text evidence="1 3 4 5 6">Interacts with BAX (By similarity). Interacts with BCL2 and BCL2L1/BCLX (By similarity). Interacts with APAF1 (PubMed:9829980, PubMed:9878060). Interacts with ITPR1, ITPR2 and ITPR3; the interaction with ITPR1 is increased in the presence of AHCLY1 (By similarity). Interacts with AHCYL1 (By similarity). Interacts with HIP1R (via ENTH and I/LWEQ domains) (By similarity). Interacts with CASP9 (By similarity). Interacts with BCL2L11/BIM (By similarity). Interacts with BIK (By similarity). Interacts with UBQLN4 (By similarity). Interacts with NME2/NM23-H2 (PubMed:17532299). Interacts with PMAIP1/NOXA (By similarity). Interacts with TPX2 (PubMed:27753540). Interacts with UBQLN1; in the cytoplasm (By similarity). Interacts (via BH1 domain) with BECN1 (By similarity).</text>
</comment>
<comment type="subcellular location">
    <subcellularLocation>
        <location evidence="1">Mitochondrion</location>
    </subcellularLocation>
    <subcellularLocation>
        <location evidence="1">Nucleus membrane</location>
    </subcellularLocation>
    <subcellularLocation>
        <location evidence="1">Endoplasmic reticulum</location>
    </subcellularLocation>
    <subcellularLocation>
        <location evidence="4">Cytoplasm</location>
        <location evidence="4">Cytoskeleton</location>
        <location evidence="4">Spindle</location>
    </subcellularLocation>
    <text evidence="1">Localizes to mitochondria-associated endoplasmic reticulum membranes (MAMs) (By similarity). Localization to MAMs is greatly reduced under apoptotic stress conditions (By similarity).</text>
</comment>
<comment type="tissue specificity">
    <text evidence="5 6">Expressed in multiple embryonic tissues (PubMed:9829980). Restricted to the ovary and testis in adult mice (PubMed:9829980, PubMed:9878060).</text>
</comment>
<comment type="developmental stage">
    <text evidence="4">Expressed during all phases of oocyte maturation; localized at the meiotic spindle and spindle poles during meiosis.</text>
</comment>
<comment type="PTM">
    <text evidence="1">Monoubiquitinated by UBQLN1; results in stabilization of BCL2L10 protein abundance and in relocalization from mitochondria to cytoplasm.</text>
</comment>
<comment type="similarity">
    <text evidence="9">Belongs to the Bcl-2 family.</text>
</comment>
<name>B2L10_MOUSE</name>
<gene>
    <name evidence="10" type="primary">Bcl2l10</name>
    <name evidence="1" type="synonym">Bcl-b</name>
    <name evidence="8" type="synonym">Boo</name>
    <name evidence="7" type="synonym">Diva</name>
</gene>
<reference key="1">
    <citation type="journal article" date="1999" name="EMBO J.">
        <title>Boo, a novel negative regulator of cell death, interacts with Apaf-1.</title>
        <authorList>
            <person name="Song Q.Z."/>
            <person name="Kuang Y.P."/>
            <person name="Dixit V.M."/>
            <person name="Vincenz C."/>
        </authorList>
    </citation>
    <scope>NUCLEOTIDE SEQUENCE [MRNA]</scope>
    <scope>INTERACTION WITH APAF1</scope>
    <scope>TISSUE SPECIFICITY</scope>
    <source>
        <strain>C57BL/6 X DBA/2</strain>
        <tissue>Ovary</tissue>
    </source>
</reference>
<reference key="2">
    <citation type="journal article" date="1998" name="J. Biol. Chem.">
        <title>Diva, a Bcl-2 homologue that binds directly to Apaf-1 and induces BH3-independent cell death.</title>
        <authorList>
            <person name="Inohara N."/>
            <person name="Gourley T.S."/>
            <person name="Carrio R."/>
            <person name="Muniz M."/>
            <person name="Merino J."/>
            <person name="Garcia I."/>
            <person name="Koseki T."/>
            <person name="Hu Y."/>
            <person name="Chen S."/>
            <person name="Nunez G."/>
        </authorList>
    </citation>
    <scope>NUCLEOTIDE SEQUENCE [MRNA]</scope>
    <scope>INTERACTION WITH APAF1</scope>
    <scope>TISSUE SPECIFICITY</scope>
    <source>
        <strain>C57BL/6 X DBA/2</strain>
    </source>
</reference>
<reference key="3">
    <citation type="journal article" date="2005" name="Science">
        <title>The transcriptional landscape of the mammalian genome.</title>
        <authorList>
            <person name="Carninci P."/>
            <person name="Kasukawa T."/>
            <person name="Katayama S."/>
            <person name="Gough J."/>
            <person name="Frith M.C."/>
            <person name="Maeda N."/>
            <person name="Oyama R."/>
            <person name="Ravasi T."/>
            <person name="Lenhard B."/>
            <person name="Wells C."/>
            <person name="Kodzius R."/>
            <person name="Shimokawa K."/>
            <person name="Bajic V.B."/>
            <person name="Brenner S.E."/>
            <person name="Batalov S."/>
            <person name="Forrest A.R."/>
            <person name="Zavolan M."/>
            <person name="Davis M.J."/>
            <person name="Wilming L.G."/>
            <person name="Aidinis V."/>
            <person name="Allen J.E."/>
            <person name="Ambesi-Impiombato A."/>
            <person name="Apweiler R."/>
            <person name="Aturaliya R.N."/>
            <person name="Bailey T.L."/>
            <person name="Bansal M."/>
            <person name="Baxter L."/>
            <person name="Beisel K.W."/>
            <person name="Bersano T."/>
            <person name="Bono H."/>
            <person name="Chalk A.M."/>
            <person name="Chiu K.P."/>
            <person name="Choudhary V."/>
            <person name="Christoffels A."/>
            <person name="Clutterbuck D.R."/>
            <person name="Crowe M.L."/>
            <person name="Dalla E."/>
            <person name="Dalrymple B.P."/>
            <person name="de Bono B."/>
            <person name="Della Gatta G."/>
            <person name="di Bernardo D."/>
            <person name="Down T."/>
            <person name="Engstrom P."/>
            <person name="Fagiolini M."/>
            <person name="Faulkner G."/>
            <person name="Fletcher C.F."/>
            <person name="Fukushima T."/>
            <person name="Furuno M."/>
            <person name="Futaki S."/>
            <person name="Gariboldi M."/>
            <person name="Georgii-Hemming P."/>
            <person name="Gingeras T.R."/>
            <person name="Gojobori T."/>
            <person name="Green R.E."/>
            <person name="Gustincich S."/>
            <person name="Harbers M."/>
            <person name="Hayashi Y."/>
            <person name="Hensch T.K."/>
            <person name="Hirokawa N."/>
            <person name="Hill D."/>
            <person name="Huminiecki L."/>
            <person name="Iacono M."/>
            <person name="Ikeo K."/>
            <person name="Iwama A."/>
            <person name="Ishikawa T."/>
            <person name="Jakt M."/>
            <person name="Kanapin A."/>
            <person name="Katoh M."/>
            <person name="Kawasawa Y."/>
            <person name="Kelso J."/>
            <person name="Kitamura H."/>
            <person name="Kitano H."/>
            <person name="Kollias G."/>
            <person name="Krishnan S.P."/>
            <person name="Kruger A."/>
            <person name="Kummerfeld S.K."/>
            <person name="Kurochkin I.V."/>
            <person name="Lareau L.F."/>
            <person name="Lazarevic D."/>
            <person name="Lipovich L."/>
            <person name="Liu J."/>
            <person name="Liuni S."/>
            <person name="McWilliam S."/>
            <person name="Madan Babu M."/>
            <person name="Madera M."/>
            <person name="Marchionni L."/>
            <person name="Matsuda H."/>
            <person name="Matsuzawa S."/>
            <person name="Miki H."/>
            <person name="Mignone F."/>
            <person name="Miyake S."/>
            <person name="Morris K."/>
            <person name="Mottagui-Tabar S."/>
            <person name="Mulder N."/>
            <person name="Nakano N."/>
            <person name="Nakauchi H."/>
            <person name="Ng P."/>
            <person name="Nilsson R."/>
            <person name="Nishiguchi S."/>
            <person name="Nishikawa S."/>
            <person name="Nori F."/>
            <person name="Ohara O."/>
            <person name="Okazaki Y."/>
            <person name="Orlando V."/>
            <person name="Pang K.C."/>
            <person name="Pavan W.J."/>
            <person name="Pavesi G."/>
            <person name="Pesole G."/>
            <person name="Petrovsky N."/>
            <person name="Piazza S."/>
            <person name="Reed J."/>
            <person name="Reid J.F."/>
            <person name="Ring B.Z."/>
            <person name="Ringwald M."/>
            <person name="Rost B."/>
            <person name="Ruan Y."/>
            <person name="Salzberg S.L."/>
            <person name="Sandelin A."/>
            <person name="Schneider C."/>
            <person name="Schoenbach C."/>
            <person name="Sekiguchi K."/>
            <person name="Semple C.A."/>
            <person name="Seno S."/>
            <person name="Sessa L."/>
            <person name="Sheng Y."/>
            <person name="Shibata Y."/>
            <person name="Shimada H."/>
            <person name="Shimada K."/>
            <person name="Silva D."/>
            <person name="Sinclair B."/>
            <person name="Sperling S."/>
            <person name="Stupka E."/>
            <person name="Sugiura K."/>
            <person name="Sultana R."/>
            <person name="Takenaka Y."/>
            <person name="Taki K."/>
            <person name="Tammoja K."/>
            <person name="Tan S.L."/>
            <person name="Tang S."/>
            <person name="Taylor M.S."/>
            <person name="Tegner J."/>
            <person name="Teichmann S.A."/>
            <person name="Ueda H.R."/>
            <person name="van Nimwegen E."/>
            <person name="Verardo R."/>
            <person name="Wei C.L."/>
            <person name="Yagi K."/>
            <person name="Yamanishi H."/>
            <person name="Zabarovsky E."/>
            <person name="Zhu S."/>
            <person name="Zimmer A."/>
            <person name="Hide W."/>
            <person name="Bult C."/>
            <person name="Grimmond S.M."/>
            <person name="Teasdale R.D."/>
            <person name="Liu E.T."/>
            <person name="Brusic V."/>
            <person name="Quackenbush J."/>
            <person name="Wahlestedt C."/>
            <person name="Mattick J.S."/>
            <person name="Hume D.A."/>
            <person name="Kai C."/>
            <person name="Sasaki D."/>
            <person name="Tomaru Y."/>
            <person name="Fukuda S."/>
            <person name="Kanamori-Katayama M."/>
            <person name="Suzuki M."/>
            <person name="Aoki J."/>
            <person name="Arakawa T."/>
            <person name="Iida J."/>
            <person name="Imamura K."/>
            <person name="Itoh M."/>
            <person name="Kato T."/>
            <person name="Kawaji H."/>
            <person name="Kawagashira N."/>
            <person name="Kawashima T."/>
            <person name="Kojima M."/>
            <person name="Kondo S."/>
            <person name="Konno H."/>
            <person name="Nakano K."/>
            <person name="Ninomiya N."/>
            <person name="Nishio T."/>
            <person name="Okada M."/>
            <person name="Plessy C."/>
            <person name="Shibata K."/>
            <person name="Shiraki T."/>
            <person name="Suzuki S."/>
            <person name="Tagami M."/>
            <person name="Waki K."/>
            <person name="Watahiki A."/>
            <person name="Okamura-Oho Y."/>
            <person name="Suzuki H."/>
            <person name="Kawai J."/>
            <person name="Hayashizaki Y."/>
        </authorList>
    </citation>
    <scope>NUCLEOTIDE SEQUENCE [LARGE SCALE MRNA]</scope>
    <source>
        <strain>C57BL/6J</strain>
    </source>
</reference>
<reference key="4">
    <citation type="submission" date="2005-07" db="EMBL/GenBank/DDBJ databases">
        <authorList>
            <person name="Mural R.J."/>
            <person name="Adams M.D."/>
            <person name="Myers E.W."/>
            <person name="Smith H.O."/>
            <person name="Venter J.C."/>
        </authorList>
    </citation>
    <scope>NUCLEOTIDE SEQUENCE [LARGE SCALE GENOMIC DNA]</scope>
</reference>
<reference key="5">
    <citation type="journal article" date="2004" name="Genome Res.">
        <title>The status, quality, and expansion of the NIH full-length cDNA project: the Mammalian Gene Collection (MGC).</title>
        <authorList>
            <consortium name="The MGC Project Team"/>
        </authorList>
    </citation>
    <scope>NUCLEOTIDE SEQUENCE [LARGE SCALE MRNA]</scope>
    <source>
        <strain>C57BL/6J</strain>
        <tissue>Egg</tissue>
    </source>
</reference>
<reference key="6">
    <citation type="journal article" date="2007" name="Biochem. Biophys. Res. Commun.">
        <title>NM23-H2 involves in negative regulation of Diva and Bcl2L10 in apoptosis signaling.</title>
        <authorList>
            <person name="Kang Y."/>
            <person name="Lee D.C."/>
            <person name="Han J."/>
            <person name="Yoon S."/>
            <person name="Won M."/>
            <person name="Yeom J.H."/>
            <person name="Seong M.J."/>
            <person name="Ko J.J."/>
            <person name="Lee K.A."/>
            <person name="Lee K."/>
            <person name="Bae J."/>
        </authorList>
    </citation>
    <scope>INTERACTION WITH NME2</scope>
</reference>
<reference key="7">
    <citation type="journal article" date="2016" name="Cell Cycle">
        <title>Bcl2l10, a new Tpx2 binding partner, is a master regulator of Aurora kinase A in mouse oocytes.</title>
        <authorList>
            <person name="Lee S.Y."/>
            <person name="Kim E.Y."/>
            <person name="Kim K.H."/>
            <person name="Lee K.A."/>
        </authorList>
    </citation>
    <scope>FUNCTION</scope>
    <scope>INTERACTION WITH TPX2</scope>
    <scope>SUBCELLULAR LOCATION</scope>
    <scope>DEVELOPMENTAL STAGE</scope>
</reference>
<reference evidence="11" key="8">
    <citation type="journal article" date="2010" name="Proteins">
        <title>The structure of Boo/Diva reveals a divergent Bcl-2 protein.</title>
        <authorList>
            <person name="Rautureau G.J."/>
            <person name="Day C.L."/>
            <person name="Hinds M.G."/>
        </authorList>
    </citation>
    <scope>STRUCTURE BY NMR OF 1-165</scope>
</reference>
<sequence>MADSQDPLHERTRRLLSDYIFFCAREPDTPEPPPTSVEAALLRSVTRQIQQEHQEFFSSFCESRGNRLELVKQMADKLLSKDQDFSWSQLVMLLAFAGTLMNQGPYMAVKQKRDLGNRVIVTRDCCLIVNFLYNLLMGRRHRARLEALGGWDGFCRFFKNPLPLGFWRRLLIQAFLSGFFATAIFFIWKRL</sequence>
<keyword id="KW-0002">3D-structure</keyword>
<keyword id="KW-0053">Apoptosis</keyword>
<keyword id="KW-0963">Cytoplasm</keyword>
<keyword id="KW-0206">Cytoskeleton</keyword>
<keyword id="KW-0256">Endoplasmic reticulum</keyword>
<keyword id="KW-1017">Isopeptide bond</keyword>
<keyword id="KW-0472">Membrane</keyword>
<keyword id="KW-0496">Mitochondrion</keyword>
<keyword id="KW-0539">Nucleus</keyword>
<keyword id="KW-1185">Reference proteome</keyword>
<keyword id="KW-0812">Transmembrane</keyword>
<keyword id="KW-1133">Transmembrane helix</keyword>
<keyword id="KW-0832">Ubl conjugation</keyword>
<accession>Q9Z0F3</accession>
<accession>Q3ULP5</accession>
<accession>Q7TPY8</accession>
<protein>
    <recommendedName>
        <fullName evidence="10">Bcl-2-like protein 10</fullName>
        <shortName evidence="1">Bcl2-L-10</shortName>
    </recommendedName>
    <alternativeName>
        <fullName evidence="8">Anti-apoptotic protein Boo</fullName>
    </alternativeName>
    <alternativeName>
        <fullName evidence="1">Apoptosis regulator Bcl-B</fullName>
    </alternativeName>
    <alternativeName>
        <fullName evidence="7">Bcl-2 homolog Diva</fullName>
    </alternativeName>
</protein>
<proteinExistence type="evidence at protein level"/>
<dbReference type="EMBL" id="AF102501">
    <property type="protein sequence ID" value="AAD08703.1"/>
    <property type="molecule type" value="mRNA"/>
</dbReference>
<dbReference type="EMBL" id="AF067660">
    <property type="protein sequence ID" value="AAC83150.1"/>
    <property type="molecule type" value="mRNA"/>
</dbReference>
<dbReference type="EMBL" id="AK136172">
    <property type="protein sequence ID" value="BAE22856.1"/>
    <property type="molecule type" value="mRNA"/>
</dbReference>
<dbReference type="EMBL" id="AK145385">
    <property type="protein sequence ID" value="BAE26403.1"/>
    <property type="molecule type" value="mRNA"/>
</dbReference>
<dbReference type="EMBL" id="AK162127">
    <property type="protein sequence ID" value="BAE36742.1"/>
    <property type="molecule type" value="mRNA"/>
</dbReference>
<dbReference type="EMBL" id="CH466522">
    <property type="protein sequence ID" value="EDL26315.1"/>
    <property type="molecule type" value="Genomic_DNA"/>
</dbReference>
<dbReference type="EMBL" id="BC052690">
    <property type="protein sequence ID" value="AAH52690.1"/>
    <property type="molecule type" value="mRNA"/>
</dbReference>
<dbReference type="CCDS" id="CCDS23341.1"/>
<dbReference type="RefSeq" id="NP_038507.1">
    <property type="nucleotide sequence ID" value="NM_013479.2"/>
</dbReference>
<dbReference type="PDB" id="2KUA">
    <property type="method" value="NMR"/>
    <property type="chains" value="A=1-165"/>
</dbReference>
<dbReference type="PDBsum" id="2KUA"/>
<dbReference type="BMRB" id="Q9Z0F3"/>
<dbReference type="SMR" id="Q9Z0F3"/>
<dbReference type="BioGRID" id="198324">
    <property type="interactions" value="1"/>
</dbReference>
<dbReference type="FunCoup" id="Q9Z0F3">
    <property type="interactions" value="31"/>
</dbReference>
<dbReference type="MINT" id="Q9Z0F3"/>
<dbReference type="STRING" id="10090.ENSMUSP00000034709"/>
<dbReference type="PhosphoSitePlus" id="Q9Z0F3"/>
<dbReference type="PaxDb" id="10090-ENSMUSP00000034709"/>
<dbReference type="Antibodypedia" id="24926">
    <property type="antibodies" value="236 antibodies from 36 providers"/>
</dbReference>
<dbReference type="DNASU" id="12049"/>
<dbReference type="Ensembl" id="ENSMUST00000034709.7">
    <property type="protein sequence ID" value="ENSMUSP00000034709.6"/>
    <property type="gene ID" value="ENSMUSG00000032191.7"/>
</dbReference>
<dbReference type="GeneID" id="12049"/>
<dbReference type="KEGG" id="mmu:12049"/>
<dbReference type="UCSC" id="uc012gwy.1">
    <property type="organism name" value="mouse"/>
</dbReference>
<dbReference type="AGR" id="MGI:1330841"/>
<dbReference type="CTD" id="10017"/>
<dbReference type="MGI" id="MGI:1330841">
    <property type="gene designation" value="Bcl2l10"/>
</dbReference>
<dbReference type="VEuPathDB" id="HostDB:ENSMUSG00000032191"/>
<dbReference type="eggNOG" id="KOG4728">
    <property type="taxonomic scope" value="Eukaryota"/>
</dbReference>
<dbReference type="GeneTree" id="ENSGT00940000164610"/>
<dbReference type="HOGENOM" id="CLU_122207_0_0_1"/>
<dbReference type="InParanoid" id="Q9Z0F3"/>
<dbReference type="OMA" id="TDYLEYC"/>
<dbReference type="OrthoDB" id="8856583at2759"/>
<dbReference type="PhylomeDB" id="Q9Z0F3"/>
<dbReference type="TreeFam" id="TF334762"/>
<dbReference type="BioGRID-ORCS" id="12049">
    <property type="hits" value="2 hits in 78 CRISPR screens"/>
</dbReference>
<dbReference type="ChiTaRS" id="Bcl2l10">
    <property type="organism name" value="mouse"/>
</dbReference>
<dbReference type="EvolutionaryTrace" id="Q9Z0F3"/>
<dbReference type="PRO" id="PR:Q9Z0F3"/>
<dbReference type="Proteomes" id="UP000000589">
    <property type="component" value="Chromosome 9"/>
</dbReference>
<dbReference type="RNAct" id="Q9Z0F3">
    <property type="molecule type" value="protein"/>
</dbReference>
<dbReference type="Bgee" id="ENSMUSG00000032191">
    <property type="expression patterns" value="Expressed in secondary oocyte and 23 other cell types or tissues"/>
</dbReference>
<dbReference type="GO" id="GO:0005783">
    <property type="term" value="C:endoplasmic reticulum"/>
    <property type="evidence" value="ECO:0007669"/>
    <property type="project" value="UniProtKB-SubCell"/>
</dbReference>
<dbReference type="GO" id="GO:0016020">
    <property type="term" value="C:membrane"/>
    <property type="evidence" value="ECO:0000314"/>
    <property type="project" value="MGI"/>
</dbReference>
<dbReference type="GO" id="GO:0044233">
    <property type="term" value="C:mitochondria-associated endoplasmic reticulum membrane contact site"/>
    <property type="evidence" value="ECO:0000250"/>
    <property type="project" value="UniProtKB"/>
</dbReference>
<dbReference type="GO" id="GO:0005739">
    <property type="term" value="C:mitochondrion"/>
    <property type="evidence" value="ECO:0000250"/>
    <property type="project" value="UniProtKB"/>
</dbReference>
<dbReference type="GO" id="GO:0031965">
    <property type="term" value="C:nuclear membrane"/>
    <property type="evidence" value="ECO:0007669"/>
    <property type="project" value="UniProtKB-SubCell"/>
</dbReference>
<dbReference type="GO" id="GO:0005819">
    <property type="term" value="C:spindle"/>
    <property type="evidence" value="ECO:0000314"/>
    <property type="project" value="UniProtKB"/>
</dbReference>
<dbReference type="GO" id="GO:0005509">
    <property type="term" value="F:calcium ion binding"/>
    <property type="evidence" value="ECO:0000250"/>
    <property type="project" value="UniProtKB"/>
</dbReference>
<dbReference type="GO" id="GO:0042802">
    <property type="term" value="F:identical protein binding"/>
    <property type="evidence" value="ECO:0000353"/>
    <property type="project" value="MGI"/>
</dbReference>
<dbReference type="GO" id="GO:0006915">
    <property type="term" value="P:apoptotic process"/>
    <property type="evidence" value="ECO:0000250"/>
    <property type="project" value="UniProtKB"/>
</dbReference>
<dbReference type="GO" id="GO:0097192">
    <property type="term" value="P:extrinsic apoptotic signaling pathway in absence of ligand"/>
    <property type="evidence" value="ECO:0000314"/>
    <property type="project" value="MGI"/>
</dbReference>
<dbReference type="GO" id="GO:0097193">
    <property type="term" value="P:intrinsic apoptotic signaling pathway"/>
    <property type="evidence" value="ECO:0000314"/>
    <property type="project" value="MGI"/>
</dbReference>
<dbReference type="GO" id="GO:0031023">
    <property type="term" value="P:microtubule organizing center organization"/>
    <property type="evidence" value="ECO:0000315"/>
    <property type="project" value="UniProtKB"/>
</dbReference>
<dbReference type="GO" id="GO:0043066">
    <property type="term" value="P:negative regulation of apoptotic process"/>
    <property type="evidence" value="ECO:0000266"/>
    <property type="project" value="MGI"/>
</dbReference>
<dbReference type="GO" id="GO:2001240">
    <property type="term" value="P:negative regulation of extrinsic apoptotic signaling pathway in absence of ligand"/>
    <property type="evidence" value="ECO:0000314"/>
    <property type="project" value="MGI"/>
</dbReference>
<dbReference type="GO" id="GO:2001243">
    <property type="term" value="P:negative regulation of intrinsic apoptotic signaling pathway"/>
    <property type="evidence" value="ECO:0000314"/>
    <property type="project" value="MGI"/>
</dbReference>
<dbReference type="GO" id="GO:0043065">
    <property type="term" value="P:positive regulation of apoptotic process"/>
    <property type="evidence" value="ECO:0000314"/>
    <property type="project" value="MGI"/>
</dbReference>
<dbReference type="FunFam" id="1.10.437.10:FF:000014">
    <property type="entry name" value="Bcl-2-like protein 10"/>
    <property type="match status" value="1"/>
</dbReference>
<dbReference type="Gene3D" id="1.10.437.10">
    <property type="entry name" value="Blc2-like"/>
    <property type="match status" value="1"/>
</dbReference>
<dbReference type="InterPro" id="IPR036834">
    <property type="entry name" value="Bcl-2-like_sf"/>
</dbReference>
<dbReference type="InterPro" id="IPR046371">
    <property type="entry name" value="Bcl-2_BH1-3"/>
</dbReference>
<dbReference type="InterPro" id="IPR026298">
    <property type="entry name" value="Bcl-2_fam"/>
</dbReference>
<dbReference type="InterPro" id="IPR002475">
    <property type="entry name" value="Bcl2-like"/>
</dbReference>
<dbReference type="PANTHER" id="PTHR11256">
    <property type="entry name" value="BCL-2 RELATED"/>
    <property type="match status" value="1"/>
</dbReference>
<dbReference type="PANTHER" id="PTHR11256:SF47">
    <property type="entry name" value="BCL-2-LIKE PROTEIN 10"/>
    <property type="match status" value="1"/>
</dbReference>
<dbReference type="Pfam" id="PF00452">
    <property type="entry name" value="Bcl-2"/>
    <property type="match status" value="1"/>
</dbReference>
<dbReference type="SMART" id="SM00337">
    <property type="entry name" value="BCL"/>
    <property type="match status" value="1"/>
</dbReference>
<dbReference type="SUPFAM" id="SSF56854">
    <property type="entry name" value="Bcl-2 inhibitors of programmed cell death"/>
    <property type="match status" value="1"/>
</dbReference>
<dbReference type="PROSITE" id="PS50062">
    <property type="entry name" value="BCL2_FAMILY"/>
    <property type="match status" value="1"/>
</dbReference>